<dbReference type="EMBL" id="AE005176">
    <property type="protein sequence ID" value="AAK04229.1"/>
    <property type="molecule type" value="Genomic_DNA"/>
</dbReference>
<dbReference type="PIR" id="C86641">
    <property type="entry name" value="C86641"/>
</dbReference>
<dbReference type="RefSeq" id="NP_266287.1">
    <property type="nucleotide sequence ID" value="NC_002662.1"/>
</dbReference>
<dbReference type="RefSeq" id="WP_003131818.1">
    <property type="nucleotide sequence ID" value="NC_002662.1"/>
</dbReference>
<dbReference type="SMR" id="Q9CJ70"/>
<dbReference type="PaxDb" id="272623-L133770"/>
<dbReference type="EnsemblBacteria" id="AAK04229">
    <property type="protein sequence ID" value="AAK04229"/>
    <property type="gene ID" value="L133770"/>
</dbReference>
<dbReference type="GeneID" id="89632278"/>
<dbReference type="KEGG" id="lla:L133770"/>
<dbReference type="PATRIC" id="fig|272623.7.peg.144"/>
<dbReference type="eggNOG" id="COG0230">
    <property type="taxonomic scope" value="Bacteria"/>
</dbReference>
<dbReference type="HOGENOM" id="CLU_129938_2_0_9"/>
<dbReference type="Proteomes" id="UP000002196">
    <property type="component" value="Chromosome"/>
</dbReference>
<dbReference type="GO" id="GO:1990904">
    <property type="term" value="C:ribonucleoprotein complex"/>
    <property type="evidence" value="ECO:0007669"/>
    <property type="project" value="UniProtKB-KW"/>
</dbReference>
<dbReference type="GO" id="GO:0005840">
    <property type="term" value="C:ribosome"/>
    <property type="evidence" value="ECO:0007669"/>
    <property type="project" value="UniProtKB-KW"/>
</dbReference>
<dbReference type="GO" id="GO:0003735">
    <property type="term" value="F:structural constituent of ribosome"/>
    <property type="evidence" value="ECO:0007669"/>
    <property type="project" value="InterPro"/>
</dbReference>
<dbReference type="GO" id="GO:0006412">
    <property type="term" value="P:translation"/>
    <property type="evidence" value="ECO:0007669"/>
    <property type="project" value="UniProtKB-UniRule"/>
</dbReference>
<dbReference type="FunFam" id="1.10.287.3980:FF:000001">
    <property type="entry name" value="Mitochondrial ribosomal protein L34"/>
    <property type="match status" value="1"/>
</dbReference>
<dbReference type="Gene3D" id="1.10.287.3980">
    <property type="match status" value="1"/>
</dbReference>
<dbReference type="HAMAP" id="MF_00391">
    <property type="entry name" value="Ribosomal_bL34"/>
    <property type="match status" value="1"/>
</dbReference>
<dbReference type="InterPro" id="IPR000271">
    <property type="entry name" value="Ribosomal_bL34"/>
</dbReference>
<dbReference type="InterPro" id="IPR020939">
    <property type="entry name" value="Ribosomal_bL34_CS"/>
</dbReference>
<dbReference type="NCBIfam" id="TIGR01030">
    <property type="entry name" value="rpmH_bact"/>
    <property type="match status" value="1"/>
</dbReference>
<dbReference type="PANTHER" id="PTHR14503:SF4">
    <property type="entry name" value="LARGE RIBOSOMAL SUBUNIT PROTEIN BL34M"/>
    <property type="match status" value="1"/>
</dbReference>
<dbReference type="PANTHER" id="PTHR14503">
    <property type="entry name" value="MITOCHONDRIAL RIBOSOMAL PROTEIN 34 FAMILY MEMBER"/>
    <property type="match status" value="1"/>
</dbReference>
<dbReference type="Pfam" id="PF00468">
    <property type="entry name" value="Ribosomal_L34"/>
    <property type="match status" value="1"/>
</dbReference>
<dbReference type="PROSITE" id="PS00784">
    <property type="entry name" value="RIBOSOMAL_L34"/>
    <property type="match status" value="1"/>
</dbReference>
<reference key="1">
    <citation type="journal article" date="2001" name="Genome Res.">
        <title>The complete genome sequence of the lactic acid bacterium Lactococcus lactis ssp. lactis IL1403.</title>
        <authorList>
            <person name="Bolotin A."/>
            <person name="Wincker P."/>
            <person name="Mauger S."/>
            <person name="Jaillon O."/>
            <person name="Malarme K."/>
            <person name="Weissenbach J."/>
            <person name="Ehrlich S.D."/>
            <person name="Sorokin A."/>
        </authorList>
    </citation>
    <scope>NUCLEOTIDE SEQUENCE [LARGE SCALE GENOMIC DNA]</scope>
    <source>
        <strain>IL1403</strain>
    </source>
</reference>
<proteinExistence type="inferred from homology"/>
<name>RL34_LACLA</name>
<accession>Q9CJ70</accession>
<sequence>MKRTYQPHKKSRKTTHGFRSRMATKNGRRVLAARRRKGRASLTV</sequence>
<comment type="similarity">
    <text evidence="2">Belongs to the bacterial ribosomal protein bL34 family.</text>
</comment>
<gene>
    <name type="primary">rpmH</name>
    <name type="ordered locus">LL0131</name>
    <name type="ORF">L133770</name>
</gene>
<evidence type="ECO:0000256" key="1">
    <source>
        <dbReference type="SAM" id="MobiDB-lite"/>
    </source>
</evidence>
<evidence type="ECO:0000305" key="2"/>
<protein>
    <recommendedName>
        <fullName evidence="2">Large ribosomal subunit protein bL34</fullName>
    </recommendedName>
    <alternativeName>
        <fullName>50S ribosomal protein L34</fullName>
    </alternativeName>
</protein>
<organism>
    <name type="scientific">Lactococcus lactis subsp. lactis (strain IL1403)</name>
    <name type="common">Streptococcus lactis</name>
    <dbReference type="NCBI Taxonomy" id="272623"/>
    <lineage>
        <taxon>Bacteria</taxon>
        <taxon>Bacillati</taxon>
        <taxon>Bacillota</taxon>
        <taxon>Bacilli</taxon>
        <taxon>Lactobacillales</taxon>
        <taxon>Streptococcaceae</taxon>
        <taxon>Lactococcus</taxon>
    </lineage>
</organism>
<keyword id="KW-1185">Reference proteome</keyword>
<keyword id="KW-0687">Ribonucleoprotein</keyword>
<keyword id="KW-0689">Ribosomal protein</keyword>
<feature type="chain" id="PRO_0000187396" description="Large ribosomal subunit protein bL34">
    <location>
        <begin position="1"/>
        <end position="44"/>
    </location>
</feature>
<feature type="region of interest" description="Disordered" evidence="1">
    <location>
        <begin position="1"/>
        <end position="26"/>
    </location>
</feature>
<feature type="compositionally biased region" description="Basic residues" evidence="1">
    <location>
        <begin position="1"/>
        <end position="19"/>
    </location>
</feature>